<comment type="function">
    <text evidence="1">Negatively regulates transcription of bacterial ribonucleotide reductase nrd genes and operons by binding to NrdR-boxes.</text>
</comment>
<comment type="cofactor">
    <cofactor evidence="1">
        <name>Zn(2+)</name>
        <dbReference type="ChEBI" id="CHEBI:29105"/>
    </cofactor>
    <text evidence="1">Binds 1 zinc ion.</text>
</comment>
<comment type="similarity">
    <text evidence="1">Belongs to the NrdR family.</text>
</comment>
<comment type="sequence caution" evidence="3">
    <conflict type="erroneous initiation">
        <sequence resource="EMBL-CDS" id="AAV61922"/>
    </conflict>
</comment>
<reference key="1">
    <citation type="journal article" date="2004" name="Nat. Biotechnol.">
        <title>Complete sequence and comparative genome analysis of the dairy bacterium Streptococcus thermophilus.</title>
        <authorList>
            <person name="Bolotin A."/>
            <person name="Quinquis B."/>
            <person name="Renault P."/>
            <person name="Sorokin A."/>
            <person name="Ehrlich S.D."/>
            <person name="Kulakauskas S."/>
            <person name="Lapidus A."/>
            <person name="Goltsman E."/>
            <person name="Mazur M."/>
            <person name="Pusch G.D."/>
            <person name="Fonstein M."/>
            <person name="Overbeek R."/>
            <person name="Kyprides N."/>
            <person name="Purnelle B."/>
            <person name="Prozzi D."/>
            <person name="Ngui K."/>
            <person name="Masuy D."/>
            <person name="Hancy F."/>
            <person name="Burteau S."/>
            <person name="Boutry M."/>
            <person name="Delcour J."/>
            <person name="Goffeau A."/>
            <person name="Hols P."/>
        </authorList>
    </citation>
    <scope>NUCLEOTIDE SEQUENCE [LARGE SCALE GENOMIC DNA]</scope>
    <source>
        <strain>CNRZ 1066</strain>
    </source>
</reference>
<organism>
    <name type="scientific">Streptococcus thermophilus (strain CNRZ 1066)</name>
    <dbReference type="NCBI Taxonomy" id="299768"/>
    <lineage>
        <taxon>Bacteria</taxon>
        <taxon>Bacillati</taxon>
        <taxon>Bacillota</taxon>
        <taxon>Bacilli</taxon>
        <taxon>Lactobacillales</taxon>
        <taxon>Streptococcaceae</taxon>
        <taxon>Streptococcus</taxon>
    </lineage>
</organism>
<name>NRDR_STRT1</name>
<sequence>MRCPKCQHNKSNVIDSRQAEDGNTIRRRRECDACHARFTTFERVEEVPLLVVKKDGTREQFSRDKIFNGILMSAQKRPVSSEDIENAITRIEQNIRRNHDGEVDSEVIGNLVMKELADLDEITYVRFASVYRSFKDVDEIEELLQEITKTVRAKKESKK</sequence>
<keyword id="KW-0067">ATP-binding</keyword>
<keyword id="KW-0238">DNA-binding</keyword>
<keyword id="KW-0479">Metal-binding</keyword>
<keyword id="KW-0547">Nucleotide-binding</keyword>
<keyword id="KW-0678">Repressor</keyword>
<keyword id="KW-0804">Transcription</keyword>
<keyword id="KW-0805">Transcription regulation</keyword>
<keyword id="KW-0862">Zinc</keyword>
<keyword id="KW-0863">Zinc-finger</keyword>
<dbReference type="EMBL" id="CP000024">
    <property type="protein sequence ID" value="AAV61922.1"/>
    <property type="status" value="ALT_INIT"/>
    <property type="molecule type" value="Genomic_DNA"/>
</dbReference>
<dbReference type="RefSeq" id="WP_002949642.1">
    <property type="nucleotide sequence ID" value="NC_006449.1"/>
</dbReference>
<dbReference type="SMR" id="Q5M1E2"/>
<dbReference type="GeneID" id="66898239"/>
<dbReference type="KEGG" id="stc:str0319"/>
<dbReference type="HOGENOM" id="CLU_108412_0_0_9"/>
<dbReference type="GO" id="GO:0005524">
    <property type="term" value="F:ATP binding"/>
    <property type="evidence" value="ECO:0007669"/>
    <property type="project" value="UniProtKB-KW"/>
</dbReference>
<dbReference type="GO" id="GO:0003677">
    <property type="term" value="F:DNA binding"/>
    <property type="evidence" value="ECO:0007669"/>
    <property type="project" value="UniProtKB-KW"/>
</dbReference>
<dbReference type="GO" id="GO:0008270">
    <property type="term" value="F:zinc ion binding"/>
    <property type="evidence" value="ECO:0007669"/>
    <property type="project" value="UniProtKB-UniRule"/>
</dbReference>
<dbReference type="GO" id="GO:0045892">
    <property type="term" value="P:negative regulation of DNA-templated transcription"/>
    <property type="evidence" value="ECO:0007669"/>
    <property type="project" value="UniProtKB-UniRule"/>
</dbReference>
<dbReference type="HAMAP" id="MF_00440">
    <property type="entry name" value="NrdR"/>
    <property type="match status" value="1"/>
</dbReference>
<dbReference type="InterPro" id="IPR005144">
    <property type="entry name" value="ATP-cone_dom"/>
</dbReference>
<dbReference type="InterPro" id="IPR055173">
    <property type="entry name" value="NrdR-like_N"/>
</dbReference>
<dbReference type="InterPro" id="IPR003796">
    <property type="entry name" value="RNR_NrdR-like"/>
</dbReference>
<dbReference type="NCBIfam" id="TIGR00244">
    <property type="entry name" value="transcriptional regulator NrdR"/>
    <property type="match status" value="1"/>
</dbReference>
<dbReference type="PANTHER" id="PTHR30455">
    <property type="entry name" value="TRANSCRIPTIONAL REPRESSOR NRDR"/>
    <property type="match status" value="1"/>
</dbReference>
<dbReference type="PANTHER" id="PTHR30455:SF2">
    <property type="entry name" value="TRANSCRIPTIONAL REPRESSOR NRDR"/>
    <property type="match status" value="1"/>
</dbReference>
<dbReference type="Pfam" id="PF03477">
    <property type="entry name" value="ATP-cone"/>
    <property type="match status" value="1"/>
</dbReference>
<dbReference type="Pfam" id="PF22811">
    <property type="entry name" value="Zn_ribbon_NrdR"/>
    <property type="match status" value="1"/>
</dbReference>
<dbReference type="PROSITE" id="PS51161">
    <property type="entry name" value="ATP_CONE"/>
    <property type="match status" value="1"/>
</dbReference>
<proteinExistence type="inferred from homology"/>
<evidence type="ECO:0000255" key="1">
    <source>
        <dbReference type="HAMAP-Rule" id="MF_00440"/>
    </source>
</evidence>
<evidence type="ECO:0000256" key="2">
    <source>
        <dbReference type="SAM" id="MobiDB-lite"/>
    </source>
</evidence>
<evidence type="ECO:0000305" key="3"/>
<protein>
    <recommendedName>
        <fullName evidence="1">Transcriptional repressor NrdR</fullName>
    </recommendedName>
</protein>
<feature type="chain" id="PRO_0000230901" description="Transcriptional repressor NrdR">
    <location>
        <begin position="1"/>
        <end position="159"/>
    </location>
</feature>
<feature type="domain" description="ATP-cone" evidence="1">
    <location>
        <begin position="49"/>
        <end position="139"/>
    </location>
</feature>
<feature type="zinc finger region" evidence="1">
    <location>
        <begin position="3"/>
        <end position="34"/>
    </location>
</feature>
<feature type="region of interest" description="Disordered" evidence="2">
    <location>
        <begin position="1"/>
        <end position="21"/>
    </location>
</feature>
<accession>Q5M1E2</accession>
<gene>
    <name evidence="1" type="primary">nrdR</name>
    <name type="ordered locus">str0319</name>
</gene>